<proteinExistence type="inferred from homology"/>
<organism>
    <name type="scientific">Thermococcus gammatolerans (strain DSM 15229 / JCM 11827 / EJ3)</name>
    <dbReference type="NCBI Taxonomy" id="593117"/>
    <lineage>
        <taxon>Archaea</taxon>
        <taxon>Methanobacteriati</taxon>
        <taxon>Methanobacteriota</taxon>
        <taxon>Thermococci</taxon>
        <taxon>Thermococcales</taxon>
        <taxon>Thermococcaceae</taxon>
        <taxon>Thermococcus</taxon>
    </lineage>
</organism>
<feature type="chain" id="PRO_1000212295" description="Exosome complex component Rrp42">
    <location>
        <begin position="1"/>
        <end position="273"/>
    </location>
</feature>
<comment type="function">
    <text evidence="1">Non-catalytic component of the exosome, which is a complex involved in RNA degradation. Contributes to the structuring of the Rrp41 active site.</text>
</comment>
<comment type="subunit">
    <text evidence="1">Component of the archaeal exosome complex. Forms a hexameric ring-like arrangement composed of 3 Rrp41-Rrp42 heterodimers. The hexameric ring associates with a trimer of Rrp4 and/or Csl4 subunits.</text>
</comment>
<comment type="subcellular location">
    <subcellularLocation>
        <location evidence="1">Cytoplasm</location>
    </subcellularLocation>
</comment>
<comment type="similarity">
    <text evidence="1">Belongs to the RNase PH family. Rrp42 subfamily.</text>
</comment>
<sequence length="273" mass="29974">MSDVEIMAGIMRDRILNLLKEGKRIDGRSFEEYRDIEIKTGFIEKAEGSAWVRLGGTRVLVGIKVDVGEPFPDLPDRGVMTTNVELVPLASPTFEPGPPDERAIELARVIDRGIRESQAVELEKLVIVPGKLVRVVFIDVHVLDHDGNLFDATGLAAMAALMTTKIPKVEYNEETGEIIKLDEYEPLPVKHVPIPVTFAKIGSSIIVDPNLDEETVMDSRLTITTDETGHISAVQKGEGGSFKLEEVMYAIDTALKKADELRKILLEAVGSAS</sequence>
<protein>
    <recommendedName>
        <fullName evidence="1">Exosome complex component Rrp42</fullName>
    </recommendedName>
</protein>
<accession>C5A2B8</accession>
<gene>
    <name evidence="1" type="primary">rrp42</name>
    <name type="ordered locus">TGAM_2035</name>
</gene>
<name>RRP42_THEGJ</name>
<evidence type="ECO:0000255" key="1">
    <source>
        <dbReference type="HAMAP-Rule" id="MF_00622"/>
    </source>
</evidence>
<reference key="1">
    <citation type="journal article" date="2007" name="Genome Biol.">
        <title>Genome analysis and genome-wide proteomics of Thermococcus gammatolerans, the most radioresistant organism known amongst the Archaea.</title>
        <authorList>
            <person name="Zivanovic Y."/>
            <person name="Armengaud J."/>
            <person name="Lagorce A."/>
            <person name="Leplat C."/>
            <person name="Guerin P."/>
            <person name="Dutertre M."/>
            <person name="Anthouard V."/>
            <person name="Forterre P."/>
            <person name="Wincker P."/>
            <person name="Confalonieri F."/>
        </authorList>
    </citation>
    <scope>NUCLEOTIDE SEQUENCE [LARGE SCALE GENOMIC DNA]</scope>
    <source>
        <strain>DSM 15229 / JCM 11827 / EJ3</strain>
    </source>
</reference>
<dbReference type="EMBL" id="CP001398">
    <property type="protein sequence ID" value="ACS34537.1"/>
    <property type="molecule type" value="Genomic_DNA"/>
</dbReference>
<dbReference type="RefSeq" id="WP_015859640.1">
    <property type="nucleotide sequence ID" value="NC_012804.1"/>
</dbReference>
<dbReference type="SMR" id="C5A2B8"/>
<dbReference type="STRING" id="593117.TGAM_2035"/>
<dbReference type="PaxDb" id="593117-TGAM_2035"/>
<dbReference type="GeneID" id="7988601"/>
<dbReference type="KEGG" id="tga:TGAM_2035"/>
<dbReference type="PATRIC" id="fig|593117.10.peg.2046"/>
<dbReference type="eggNOG" id="arCOG01574">
    <property type="taxonomic scope" value="Archaea"/>
</dbReference>
<dbReference type="HOGENOM" id="CLU_038194_0_0_2"/>
<dbReference type="OrthoDB" id="30932at2157"/>
<dbReference type="Proteomes" id="UP000001488">
    <property type="component" value="Chromosome"/>
</dbReference>
<dbReference type="GO" id="GO:0000177">
    <property type="term" value="C:cytoplasmic exosome (RNase complex)"/>
    <property type="evidence" value="ECO:0007669"/>
    <property type="project" value="TreeGrafter"/>
</dbReference>
<dbReference type="GO" id="GO:0035925">
    <property type="term" value="F:mRNA 3'-UTR AU-rich region binding"/>
    <property type="evidence" value="ECO:0007669"/>
    <property type="project" value="TreeGrafter"/>
</dbReference>
<dbReference type="GO" id="GO:0016075">
    <property type="term" value="P:rRNA catabolic process"/>
    <property type="evidence" value="ECO:0007669"/>
    <property type="project" value="TreeGrafter"/>
</dbReference>
<dbReference type="CDD" id="cd11365">
    <property type="entry name" value="RNase_PH_archRRP42"/>
    <property type="match status" value="1"/>
</dbReference>
<dbReference type="FunFam" id="3.30.230.70:FF:000017">
    <property type="entry name" value="Exosome complex component Rrp42"/>
    <property type="match status" value="1"/>
</dbReference>
<dbReference type="Gene3D" id="3.30.230.70">
    <property type="entry name" value="GHMP Kinase, N-terminal domain"/>
    <property type="match status" value="1"/>
</dbReference>
<dbReference type="HAMAP" id="MF_00622">
    <property type="entry name" value="Exosome_Rrp42"/>
    <property type="match status" value="1"/>
</dbReference>
<dbReference type="InterPro" id="IPR001247">
    <property type="entry name" value="ExoRNase_PH_dom1"/>
</dbReference>
<dbReference type="InterPro" id="IPR015847">
    <property type="entry name" value="ExoRNase_PH_dom2"/>
</dbReference>
<dbReference type="InterPro" id="IPR036345">
    <property type="entry name" value="ExoRNase_PH_dom2_sf"/>
</dbReference>
<dbReference type="InterPro" id="IPR050590">
    <property type="entry name" value="Exosome_comp_Rrp42_subfam"/>
</dbReference>
<dbReference type="InterPro" id="IPR027408">
    <property type="entry name" value="PNPase/RNase_PH_dom_sf"/>
</dbReference>
<dbReference type="InterPro" id="IPR020568">
    <property type="entry name" value="Ribosomal_Su5_D2-typ_SF"/>
</dbReference>
<dbReference type="InterPro" id="IPR020869">
    <property type="entry name" value="Rrp42_archaea"/>
</dbReference>
<dbReference type="NCBIfam" id="NF003282">
    <property type="entry name" value="PRK04282.1-1"/>
    <property type="match status" value="1"/>
</dbReference>
<dbReference type="PANTHER" id="PTHR11097:SF8">
    <property type="entry name" value="EXOSOME COMPLEX COMPONENT RRP42"/>
    <property type="match status" value="1"/>
</dbReference>
<dbReference type="PANTHER" id="PTHR11097">
    <property type="entry name" value="EXOSOME COMPLEX EXONUCLEASE RIBOSOMAL RNA PROCESSING PROTEIN"/>
    <property type="match status" value="1"/>
</dbReference>
<dbReference type="Pfam" id="PF01138">
    <property type="entry name" value="RNase_PH"/>
    <property type="match status" value="1"/>
</dbReference>
<dbReference type="Pfam" id="PF03725">
    <property type="entry name" value="RNase_PH_C"/>
    <property type="match status" value="1"/>
</dbReference>
<dbReference type="SUPFAM" id="SSF55666">
    <property type="entry name" value="Ribonuclease PH domain 2-like"/>
    <property type="match status" value="1"/>
</dbReference>
<dbReference type="SUPFAM" id="SSF54211">
    <property type="entry name" value="Ribosomal protein S5 domain 2-like"/>
    <property type="match status" value="1"/>
</dbReference>
<keyword id="KW-0963">Cytoplasm</keyword>
<keyword id="KW-0271">Exosome</keyword>
<keyword id="KW-1185">Reference proteome</keyword>